<feature type="chain" id="PRO_1000190246" description="GMP synthase [glutamine-hydrolyzing]">
    <location>
        <begin position="1"/>
        <end position="513"/>
    </location>
</feature>
<feature type="domain" description="Glutamine amidotransferase type-1" evidence="1">
    <location>
        <begin position="9"/>
        <end position="198"/>
    </location>
</feature>
<feature type="domain" description="GMPS ATP-PPase" evidence="1">
    <location>
        <begin position="199"/>
        <end position="388"/>
    </location>
</feature>
<feature type="active site" description="Nucleophile" evidence="1">
    <location>
        <position position="86"/>
    </location>
</feature>
<feature type="active site" evidence="1">
    <location>
        <position position="172"/>
    </location>
</feature>
<feature type="active site" evidence="1">
    <location>
        <position position="174"/>
    </location>
</feature>
<feature type="binding site" evidence="1">
    <location>
        <begin position="226"/>
        <end position="232"/>
    </location>
    <ligand>
        <name>ATP</name>
        <dbReference type="ChEBI" id="CHEBI:30616"/>
    </ligand>
</feature>
<evidence type="ECO:0000255" key="1">
    <source>
        <dbReference type="HAMAP-Rule" id="MF_00344"/>
    </source>
</evidence>
<keyword id="KW-0067">ATP-binding</keyword>
<keyword id="KW-0315">Glutamine amidotransferase</keyword>
<keyword id="KW-0332">GMP biosynthesis</keyword>
<keyword id="KW-0436">Ligase</keyword>
<keyword id="KW-0547">Nucleotide-binding</keyword>
<keyword id="KW-0658">Purine biosynthesis</keyword>
<keyword id="KW-1185">Reference proteome</keyword>
<organism>
    <name type="scientific">Macrococcus caseolyticus (strain JCSC5402)</name>
    <name type="common">Macrococcoides caseolyticum</name>
    <dbReference type="NCBI Taxonomy" id="458233"/>
    <lineage>
        <taxon>Bacteria</taxon>
        <taxon>Bacillati</taxon>
        <taxon>Bacillota</taxon>
        <taxon>Bacilli</taxon>
        <taxon>Bacillales</taxon>
        <taxon>Staphylococcaceae</taxon>
        <taxon>Macrococcoides</taxon>
    </lineage>
</organism>
<gene>
    <name evidence="1" type="primary">guaA</name>
    <name type="ordered locus">MCCL_1941</name>
</gene>
<reference key="1">
    <citation type="journal article" date="2009" name="J. Bacteriol.">
        <title>Complete genome sequence of Macrococcus caseolyticus strain JCSCS5402, reflecting the ancestral genome of the human-pathogenic staphylococci.</title>
        <authorList>
            <person name="Baba T."/>
            <person name="Kuwahara-Arai K."/>
            <person name="Uchiyama I."/>
            <person name="Takeuchi F."/>
            <person name="Ito T."/>
            <person name="Hiramatsu K."/>
        </authorList>
    </citation>
    <scope>NUCLEOTIDE SEQUENCE [LARGE SCALE GENOMIC DNA]</scope>
    <source>
        <strain>JCSC5402</strain>
    </source>
</reference>
<name>GUAA_MACCJ</name>
<accession>B9E8Y0</accession>
<comment type="function">
    <text evidence="1">Catalyzes the synthesis of GMP from XMP.</text>
</comment>
<comment type="catalytic activity">
    <reaction evidence="1">
        <text>XMP + L-glutamine + ATP + H2O = GMP + L-glutamate + AMP + diphosphate + 2 H(+)</text>
        <dbReference type="Rhea" id="RHEA:11680"/>
        <dbReference type="ChEBI" id="CHEBI:15377"/>
        <dbReference type="ChEBI" id="CHEBI:15378"/>
        <dbReference type="ChEBI" id="CHEBI:29985"/>
        <dbReference type="ChEBI" id="CHEBI:30616"/>
        <dbReference type="ChEBI" id="CHEBI:33019"/>
        <dbReference type="ChEBI" id="CHEBI:57464"/>
        <dbReference type="ChEBI" id="CHEBI:58115"/>
        <dbReference type="ChEBI" id="CHEBI:58359"/>
        <dbReference type="ChEBI" id="CHEBI:456215"/>
        <dbReference type="EC" id="6.3.5.2"/>
    </reaction>
</comment>
<comment type="pathway">
    <text evidence="1">Purine metabolism; GMP biosynthesis; GMP from XMP (L-Gln route): step 1/1.</text>
</comment>
<comment type="subunit">
    <text evidence="1">Homodimer.</text>
</comment>
<protein>
    <recommendedName>
        <fullName evidence="1">GMP synthase [glutamine-hydrolyzing]</fullName>
        <ecNumber evidence="1">6.3.5.2</ecNumber>
    </recommendedName>
    <alternativeName>
        <fullName evidence="1">GMP synthetase</fullName>
    </alternativeName>
    <alternativeName>
        <fullName evidence="1">Glutamine amidotransferase</fullName>
    </alternativeName>
</protein>
<proteinExistence type="inferred from homology"/>
<sequence>MEMAFEQELILVLDFGSQYNQLITRRIREMGVYSELHDHEISIEEIKKMNPKGIILSGGPNSVYEEGSFTVDPEIFNLGVPVMGICYGMQLMTKLLGGSVERANEREYGKAVIKAETHSLFTKLPEEQTVWMSHSDKVINLPEGFNVIAHSPSCKYAAIENPERNLYGVQFHPEVRHSEYGNDLLRNFIREICKCTGEWTMENFIEIEIEKIREKVGDRKVICAMSGGVDSSVVAVLIHKAIGDQLTCIFVDHGLLRKGEGDMVMKQFGEGFNMNIIRVDAKERFMSKLAGVSDPEQKRKIIGNEFVYLFDEEAAKLKDADFLAQGTLYTDIIESGTKTAQTIKSHHNVGGLPEDMQFELIEPVNTLFKDEVRALGIELGIPEHLVWRQPFPGPGLGIRVLGEITEEKLEIVRESDAILREVIAEEGLERDIWQYFTVLPDIRSVGVMGDYRTYDYTVGVRAVTSIDGMTSDFARIDWEVLQKVSSRIVNEVDHVNRVVYDITSKPPSTIEWE</sequence>
<dbReference type="EC" id="6.3.5.2" evidence="1"/>
<dbReference type="EMBL" id="AP009484">
    <property type="protein sequence ID" value="BAH18648.1"/>
    <property type="molecule type" value="Genomic_DNA"/>
</dbReference>
<dbReference type="RefSeq" id="WP_015912440.1">
    <property type="nucleotide sequence ID" value="NC_011999.1"/>
</dbReference>
<dbReference type="SMR" id="B9E8Y0"/>
<dbReference type="STRING" id="458233.MCCL_1941"/>
<dbReference type="MEROPS" id="C26.957"/>
<dbReference type="GeneID" id="61130350"/>
<dbReference type="KEGG" id="mcl:MCCL_1941"/>
<dbReference type="eggNOG" id="COG0518">
    <property type="taxonomic scope" value="Bacteria"/>
</dbReference>
<dbReference type="eggNOG" id="COG0519">
    <property type="taxonomic scope" value="Bacteria"/>
</dbReference>
<dbReference type="HOGENOM" id="CLU_014340_0_5_9"/>
<dbReference type="OrthoDB" id="9802219at2"/>
<dbReference type="UniPathway" id="UPA00189">
    <property type="reaction ID" value="UER00296"/>
</dbReference>
<dbReference type="Proteomes" id="UP000001383">
    <property type="component" value="Chromosome"/>
</dbReference>
<dbReference type="GO" id="GO:0005829">
    <property type="term" value="C:cytosol"/>
    <property type="evidence" value="ECO:0007669"/>
    <property type="project" value="TreeGrafter"/>
</dbReference>
<dbReference type="GO" id="GO:0005524">
    <property type="term" value="F:ATP binding"/>
    <property type="evidence" value="ECO:0007669"/>
    <property type="project" value="UniProtKB-UniRule"/>
</dbReference>
<dbReference type="GO" id="GO:0003921">
    <property type="term" value="F:GMP synthase activity"/>
    <property type="evidence" value="ECO:0007669"/>
    <property type="project" value="InterPro"/>
</dbReference>
<dbReference type="CDD" id="cd01742">
    <property type="entry name" value="GATase1_GMP_Synthase"/>
    <property type="match status" value="1"/>
</dbReference>
<dbReference type="CDD" id="cd01997">
    <property type="entry name" value="GMP_synthase_C"/>
    <property type="match status" value="1"/>
</dbReference>
<dbReference type="FunFam" id="3.30.300.10:FF:000002">
    <property type="entry name" value="GMP synthase [glutamine-hydrolyzing]"/>
    <property type="match status" value="1"/>
</dbReference>
<dbReference type="FunFam" id="3.40.50.620:FF:000001">
    <property type="entry name" value="GMP synthase [glutamine-hydrolyzing]"/>
    <property type="match status" value="1"/>
</dbReference>
<dbReference type="FunFam" id="3.40.50.880:FF:000001">
    <property type="entry name" value="GMP synthase [glutamine-hydrolyzing]"/>
    <property type="match status" value="1"/>
</dbReference>
<dbReference type="Gene3D" id="3.30.300.10">
    <property type="match status" value="1"/>
</dbReference>
<dbReference type="Gene3D" id="3.40.50.880">
    <property type="match status" value="1"/>
</dbReference>
<dbReference type="Gene3D" id="3.40.50.620">
    <property type="entry name" value="HUPs"/>
    <property type="match status" value="1"/>
</dbReference>
<dbReference type="HAMAP" id="MF_00344">
    <property type="entry name" value="GMP_synthase"/>
    <property type="match status" value="1"/>
</dbReference>
<dbReference type="InterPro" id="IPR029062">
    <property type="entry name" value="Class_I_gatase-like"/>
</dbReference>
<dbReference type="InterPro" id="IPR017926">
    <property type="entry name" value="GATASE"/>
</dbReference>
<dbReference type="InterPro" id="IPR001674">
    <property type="entry name" value="GMP_synth_C"/>
</dbReference>
<dbReference type="InterPro" id="IPR004739">
    <property type="entry name" value="GMP_synth_GATase"/>
</dbReference>
<dbReference type="InterPro" id="IPR022955">
    <property type="entry name" value="GMP_synthase"/>
</dbReference>
<dbReference type="InterPro" id="IPR025777">
    <property type="entry name" value="GMPS_ATP_PPase_dom"/>
</dbReference>
<dbReference type="InterPro" id="IPR022310">
    <property type="entry name" value="NAD/GMP_synthase"/>
</dbReference>
<dbReference type="InterPro" id="IPR014729">
    <property type="entry name" value="Rossmann-like_a/b/a_fold"/>
</dbReference>
<dbReference type="NCBIfam" id="TIGR00884">
    <property type="entry name" value="guaA_Cterm"/>
    <property type="match status" value="1"/>
</dbReference>
<dbReference type="NCBIfam" id="TIGR00888">
    <property type="entry name" value="guaA_Nterm"/>
    <property type="match status" value="1"/>
</dbReference>
<dbReference type="NCBIfam" id="NF000848">
    <property type="entry name" value="PRK00074.1"/>
    <property type="match status" value="1"/>
</dbReference>
<dbReference type="PANTHER" id="PTHR11922:SF2">
    <property type="entry name" value="GMP SYNTHASE [GLUTAMINE-HYDROLYZING]"/>
    <property type="match status" value="1"/>
</dbReference>
<dbReference type="PANTHER" id="PTHR11922">
    <property type="entry name" value="GMP SYNTHASE-RELATED"/>
    <property type="match status" value="1"/>
</dbReference>
<dbReference type="Pfam" id="PF00117">
    <property type="entry name" value="GATase"/>
    <property type="match status" value="1"/>
</dbReference>
<dbReference type="Pfam" id="PF00958">
    <property type="entry name" value="GMP_synt_C"/>
    <property type="match status" value="1"/>
</dbReference>
<dbReference type="Pfam" id="PF02540">
    <property type="entry name" value="NAD_synthase"/>
    <property type="match status" value="1"/>
</dbReference>
<dbReference type="PRINTS" id="PR00097">
    <property type="entry name" value="ANTSNTHASEII"/>
</dbReference>
<dbReference type="PRINTS" id="PR00099">
    <property type="entry name" value="CPSGATASE"/>
</dbReference>
<dbReference type="PRINTS" id="PR00096">
    <property type="entry name" value="GATASE"/>
</dbReference>
<dbReference type="SUPFAM" id="SSF52402">
    <property type="entry name" value="Adenine nucleotide alpha hydrolases-like"/>
    <property type="match status" value="1"/>
</dbReference>
<dbReference type="SUPFAM" id="SSF52317">
    <property type="entry name" value="Class I glutamine amidotransferase-like"/>
    <property type="match status" value="1"/>
</dbReference>
<dbReference type="SUPFAM" id="SSF54810">
    <property type="entry name" value="GMP synthetase C-terminal dimerisation domain"/>
    <property type="match status" value="1"/>
</dbReference>
<dbReference type="PROSITE" id="PS51273">
    <property type="entry name" value="GATASE_TYPE_1"/>
    <property type="match status" value="1"/>
</dbReference>
<dbReference type="PROSITE" id="PS51553">
    <property type="entry name" value="GMPS_ATP_PPASE"/>
    <property type="match status" value="1"/>
</dbReference>